<keyword id="KW-0998">Cell outer membrane</keyword>
<keyword id="KW-0143">Chaperone</keyword>
<keyword id="KW-0449">Lipoprotein</keyword>
<keyword id="KW-0472">Membrane</keyword>
<keyword id="KW-0564">Palmitate</keyword>
<keyword id="KW-0653">Protein transport</keyword>
<keyword id="KW-0732">Signal</keyword>
<keyword id="KW-0813">Transport</keyword>
<accession>B5XW49</accession>
<proteinExistence type="inferred from homology"/>
<evidence type="ECO:0000255" key="1">
    <source>
        <dbReference type="HAMAP-Rule" id="MF_00233"/>
    </source>
</evidence>
<protein>
    <recommendedName>
        <fullName evidence="1">Outer-membrane lipoprotein LolB</fullName>
    </recommendedName>
</protein>
<feature type="signal peptide" evidence="1">
    <location>
        <begin position="1"/>
        <end position="17"/>
    </location>
</feature>
<feature type="chain" id="PRO_1000100499" description="Outer-membrane lipoprotein LolB">
    <location>
        <begin position="18"/>
        <end position="203"/>
    </location>
</feature>
<feature type="lipid moiety-binding region" description="N-palmitoyl cysteine" evidence="1">
    <location>
        <position position="18"/>
    </location>
</feature>
<feature type="lipid moiety-binding region" description="S-diacylglycerol cysteine" evidence="1">
    <location>
        <position position="18"/>
    </location>
</feature>
<comment type="function">
    <text evidence="1">Plays a critical role in the incorporation of lipoproteins in the outer membrane after they are released by the LolA protein.</text>
</comment>
<comment type="subunit">
    <text evidence="1">Monomer.</text>
</comment>
<comment type="subcellular location">
    <subcellularLocation>
        <location evidence="1">Cell outer membrane</location>
        <topology evidence="1">Lipid-anchor</topology>
    </subcellularLocation>
</comment>
<comment type="similarity">
    <text evidence="1">Belongs to the LolB family.</text>
</comment>
<name>LOLB_KLEP3</name>
<reference key="1">
    <citation type="journal article" date="2008" name="PLoS Genet.">
        <title>Complete genome sequence of the N2-fixing broad host range endophyte Klebsiella pneumoniae 342 and virulence predictions verified in mice.</title>
        <authorList>
            <person name="Fouts D.E."/>
            <person name="Tyler H.L."/>
            <person name="DeBoy R.T."/>
            <person name="Daugherty S."/>
            <person name="Ren Q."/>
            <person name="Badger J.H."/>
            <person name="Durkin A.S."/>
            <person name="Huot H."/>
            <person name="Shrivastava S."/>
            <person name="Kothari S."/>
            <person name="Dodson R.J."/>
            <person name="Mohamoud Y."/>
            <person name="Khouri H."/>
            <person name="Roesch L.F.W."/>
            <person name="Krogfelt K.A."/>
            <person name="Struve C."/>
            <person name="Triplett E.W."/>
            <person name="Methe B.A."/>
        </authorList>
    </citation>
    <scope>NUCLEOTIDE SEQUENCE [LARGE SCALE GENOMIC DNA]</scope>
    <source>
        <strain>342</strain>
    </source>
</reference>
<gene>
    <name evidence="1" type="primary">lolB</name>
    <name type="ordered locus">KPK_2067</name>
</gene>
<dbReference type="EMBL" id="CP000964">
    <property type="protein sequence ID" value="ACI07819.1"/>
    <property type="molecule type" value="Genomic_DNA"/>
</dbReference>
<dbReference type="SMR" id="B5XW49"/>
<dbReference type="KEGG" id="kpe:KPK_2067"/>
<dbReference type="HOGENOM" id="CLU_092816_1_1_6"/>
<dbReference type="Proteomes" id="UP000001734">
    <property type="component" value="Chromosome"/>
</dbReference>
<dbReference type="GO" id="GO:0009279">
    <property type="term" value="C:cell outer membrane"/>
    <property type="evidence" value="ECO:0007669"/>
    <property type="project" value="UniProtKB-SubCell"/>
</dbReference>
<dbReference type="GO" id="GO:0044874">
    <property type="term" value="P:lipoprotein localization to outer membrane"/>
    <property type="evidence" value="ECO:0007669"/>
    <property type="project" value="UniProtKB-UniRule"/>
</dbReference>
<dbReference type="GO" id="GO:0015031">
    <property type="term" value="P:protein transport"/>
    <property type="evidence" value="ECO:0007669"/>
    <property type="project" value="UniProtKB-KW"/>
</dbReference>
<dbReference type="CDD" id="cd16326">
    <property type="entry name" value="LolB"/>
    <property type="match status" value="1"/>
</dbReference>
<dbReference type="Gene3D" id="2.50.20.10">
    <property type="entry name" value="Lipoprotein localisation LolA/LolB/LppX"/>
    <property type="match status" value="1"/>
</dbReference>
<dbReference type="HAMAP" id="MF_00233">
    <property type="entry name" value="LolB"/>
    <property type="match status" value="1"/>
</dbReference>
<dbReference type="InterPro" id="IPR029046">
    <property type="entry name" value="LolA/LolB/LppX"/>
</dbReference>
<dbReference type="InterPro" id="IPR004565">
    <property type="entry name" value="OM_lipoprot_LolB"/>
</dbReference>
<dbReference type="NCBIfam" id="TIGR00548">
    <property type="entry name" value="lolB"/>
    <property type="match status" value="1"/>
</dbReference>
<dbReference type="Pfam" id="PF03550">
    <property type="entry name" value="LolB"/>
    <property type="match status" value="1"/>
</dbReference>
<dbReference type="SUPFAM" id="SSF89392">
    <property type="entry name" value="Prokaryotic lipoproteins and lipoprotein localization factors"/>
    <property type="match status" value="1"/>
</dbReference>
<dbReference type="PROSITE" id="PS51257">
    <property type="entry name" value="PROKAR_LIPOPROTEIN"/>
    <property type="match status" value="1"/>
</dbReference>
<sequence length="203" mass="23004">MNRLFRLLPLASLVLTACSLHTPQGPGKSPDSPQWRQHQQAVRSLNQFQTRGAFAYLSDEQKVYARFFWQQTGQDRYRLLLTNPLGSTELSLTAQPGSVQLIDNKGQTYTATDAEEMIGRLTGMPIPLNSLRQWIIGLPGDATDYSLDDQYRLRELNYTQNGKTWHVTYGGYTSDTQPALPSNVELNNGAQRIKLKMDNWIVK</sequence>
<organism>
    <name type="scientific">Klebsiella pneumoniae (strain 342)</name>
    <dbReference type="NCBI Taxonomy" id="507522"/>
    <lineage>
        <taxon>Bacteria</taxon>
        <taxon>Pseudomonadati</taxon>
        <taxon>Pseudomonadota</taxon>
        <taxon>Gammaproteobacteria</taxon>
        <taxon>Enterobacterales</taxon>
        <taxon>Enterobacteriaceae</taxon>
        <taxon>Klebsiella/Raoultella group</taxon>
        <taxon>Klebsiella</taxon>
        <taxon>Klebsiella pneumoniae complex</taxon>
    </lineage>
</organism>